<organism>
    <name type="scientific">Schizosaccharomyces pombe (strain 972 / ATCC 24843)</name>
    <name type="common">Fission yeast</name>
    <dbReference type="NCBI Taxonomy" id="284812"/>
    <lineage>
        <taxon>Eukaryota</taxon>
        <taxon>Fungi</taxon>
        <taxon>Dikarya</taxon>
        <taxon>Ascomycota</taxon>
        <taxon>Taphrinomycotina</taxon>
        <taxon>Schizosaccharomycetes</taxon>
        <taxon>Schizosaccharomycetales</taxon>
        <taxon>Schizosaccharomycetaceae</taxon>
        <taxon>Schizosaccharomyces</taxon>
    </lineage>
</organism>
<feature type="transit peptide" description="Mitochondrion" evidence="2">
    <location>
        <begin position="1"/>
        <end position="23"/>
    </location>
</feature>
<feature type="chain" id="PRO_0000310776" description="Small ribosomal subunit protein mS43">
    <location>
        <begin position="24"/>
        <end position="268"/>
    </location>
</feature>
<dbReference type="EMBL" id="CU329671">
    <property type="protein sequence ID" value="CAA16865.3"/>
    <property type="molecule type" value="Genomic_DNA"/>
</dbReference>
<dbReference type="PIR" id="T39538">
    <property type="entry name" value="T39538"/>
</dbReference>
<dbReference type="RefSeq" id="NP_596775.2">
    <property type="nucleotide sequence ID" value="NM_001023796.3"/>
</dbReference>
<dbReference type="SMR" id="O42919"/>
<dbReference type="BioGRID" id="276459">
    <property type="interactions" value="1"/>
</dbReference>
<dbReference type="ComplexPortal" id="CPX-10315">
    <property type="entry name" value="37S mitochondrial small ribosomal subunit"/>
</dbReference>
<dbReference type="FunCoup" id="O42919">
    <property type="interactions" value="41"/>
</dbReference>
<dbReference type="STRING" id="284812.O42919"/>
<dbReference type="PaxDb" id="4896-SPBC16A3.14.1"/>
<dbReference type="EnsemblFungi" id="SPBC16A3.14.1">
    <property type="protein sequence ID" value="SPBC16A3.14.1:pep"/>
    <property type="gene ID" value="SPBC16A3.14"/>
</dbReference>
<dbReference type="KEGG" id="spo:2539915"/>
<dbReference type="PomBase" id="SPBC16A3.14"/>
<dbReference type="VEuPathDB" id="FungiDB:SPBC16A3.14"/>
<dbReference type="eggNOG" id="KOG0876">
    <property type="taxonomic scope" value="Eukaryota"/>
</dbReference>
<dbReference type="HOGENOM" id="CLU_057349_1_0_1"/>
<dbReference type="InParanoid" id="O42919"/>
<dbReference type="OMA" id="HAATFQF"/>
<dbReference type="PhylomeDB" id="O42919"/>
<dbReference type="PRO" id="PR:O42919"/>
<dbReference type="Proteomes" id="UP000002485">
    <property type="component" value="Chromosome II"/>
</dbReference>
<dbReference type="GO" id="GO:0005737">
    <property type="term" value="C:cytoplasm"/>
    <property type="evidence" value="ECO:0000318"/>
    <property type="project" value="GO_Central"/>
</dbReference>
<dbReference type="GO" id="GO:0005763">
    <property type="term" value="C:mitochondrial small ribosomal subunit"/>
    <property type="evidence" value="ECO:0000266"/>
    <property type="project" value="PomBase"/>
</dbReference>
<dbReference type="GO" id="GO:0046872">
    <property type="term" value="F:metal ion binding"/>
    <property type="evidence" value="ECO:0007669"/>
    <property type="project" value="InterPro"/>
</dbReference>
<dbReference type="GO" id="GO:0003735">
    <property type="term" value="F:structural constituent of ribosome"/>
    <property type="evidence" value="ECO:0000266"/>
    <property type="project" value="PomBase"/>
</dbReference>
<dbReference type="GO" id="GO:0004784">
    <property type="term" value="F:superoxide dismutase activity"/>
    <property type="evidence" value="ECO:0000255"/>
    <property type="project" value="PomBase"/>
</dbReference>
<dbReference type="GO" id="GO:0032543">
    <property type="term" value="P:mitochondrial translation"/>
    <property type="evidence" value="ECO:0000266"/>
    <property type="project" value="PomBase"/>
</dbReference>
<dbReference type="Gene3D" id="1.10.287.990">
    <property type="entry name" value="Fe,Mn superoxide dismutase (SOD) domain"/>
    <property type="match status" value="1"/>
</dbReference>
<dbReference type="Gene3D" id="3.55.40.20">
    <property type="entry name" value="Iron/manganese superoxide dismutase, C-terminal domain"/>
    <property type="match status" value="1"/>
</dbReference>
<dbReference type="InterPro" id="IPR019832">
    <property type="entry name" value="Mn/Fe_SOD_C"/>
</dbReference>
<dbReference type="InterPro" id="IPR036324">
    <property type="entry name" value="Mn/Fe_SOD_N_sf"/>
</dbReference>
<dbReference type="InterPro" id="IPR036314">
    <property type="entry name" value="SOD_C_sf"/>
</dbReference>
<dbReference type="PANTHER" id="PTHR43595">
    <property type="entry name" value="37S RIBOSOMAL PROTEIN S26, MITOCHONDRIAL"/>
    <property type="match status" value="1"/>
</dbReference>
<dbReference type="PANTHER" id="PTHR43595:SF3">
    <property type="entry name" value="SMALL RIBOSOMAL SUBUNIT PROTEIN MS43"/>
    <property type="match status" value="1"/>
</dbReference>
<dbReference type="Pfam" id="PF02777">
    <property type="entry name" value="Sod_Fe_C"/>
    <property type="match status" value="1"/>
</dbReference>
<dbReference type="SUPFAM" id="SSF54719">
    <property type="entry name" value="Fe,Mn superoxide dismutase (SOD), C-terminal domain"/>
    <property type="match status" value="1"/>
</dbReference>
<dbReference type="SUPFAM" id="SSF46609">
    <property type="entry name" value="Fe,Mn superoxide dismutase (SOD), N-terminal domain"/>
    <property type="match status" value="1"/>
</dbReference>
<name>RT01_SCHPO</name>
<keyword id="KW-0496">Mitochondrion</keyword>
<keyword id="KW-1185">Reference proteome</keyword>
<keyword id="KW-0687">Ribonucleoprotein</keyword>
<keyword id="KW-0689">Ribosomal protein</keyword>
<keyword id="KW-0809">Transit peptide</keyword>
<evidence type="ECO:0000250" key="1">
    <source>
        <dbReference type="UniProtKB" id="P10662"/>
    </source>
</evidence>
<evidence type="ECO:0000255" key="2"/>
<evidence type="ECO:0000305" key="3"/>
<accession>O42919</accession>
<comment type="function">
    <text evidence="1">Component of the mitochondrial ribosome (mitoribosome), a dedicated translation machinery responsible for the synthesis of mitochondrial genome-encoded proteins, including at least some of the essential transmembrane subunits of the mitochondrial respiratory chain. The mitoribosomes are attached to the mitochondrial inner membrane and translation products are cotranslationally integrated into the membrane.</text>
</comment>
<comment type="subunit">
    <text evidence="1">Component of the mitochondrial small ribosomal subunit (mt-SSU). Mature yeast 74S mitochondrial ribosomes consist of a small (37S) and a large (54S) subunit. The 37S small subunit contains a 15S ribosomal RNA (15S mt-rRNA) and at least 32 different proteins. The 54S large subunit contains a 21S rRNA (21S mt-rRNA) and at least 45 different proteins. mS43 forms a dimer with mS42, building a large protuberance adjacent to the mRNA channel exit in the mt-SSU body.</text>
</comment>
<comment type="subcellular location">
    <subcellularLocation>
        <location evidence="1">Mitochondrion</location>
    </subcellularLocation>
</comment>
<comment type="similarity">
    <text evidence="3">Belongs to the mitochondrion-specific ribosomal protein mS43 family.</text>
</comment>
<sequence>MLNTGLRKGLALSPITHLLKRCSSVTDNVHRVNYCYNYHTVPNLSQRNLLPLFSPEALDIAWDQHQRQVVKELNDRVKGTELEDSSVFNIIFQTAALPEHAATFQFASQAYNNHFFFQSLIGKRAADAKKNSKYEANAAINKAVNENFGSKENLLSKIHELASNSFGACWLWIVIDDYNRLNLLRTFQAGSPYLWTRWQSNDPHLISSVPDYSARPRKYAHVPILNLCLWNHAYYKDYGLLNRSRYIDTWFDCIDWSVIEERLTNSLV</sequence>
<proteinExistence type="inferred from homology"/>
<reference key="1">
    <citation type="journal article" date="2002" name="Nature">
        <title>The genome sequence of Schizosaccharomyces pombe.</title>
        <authorList>
            <person name="Wood V."/>
            <person name="Gwilliam R."/>
            <person name="Rajandream M.A."/>
            <person name="Lyne M.H."/>
            <person name="Lyne R."/>
            <person name="Stewart A."/>
            <person name="Sgouros J.G."/>
            <person name="Peat N."/>
            <person name="Hayles J."/>
            <person name="Baker S.G."/>
            <person name="Basham D."/>
            <person name="Bowman S."/>
            <person name="Brooks K."/>
            <person name="Brown D."/>
            <person name="Brown S."/>
            <person name="Chillingworth T."/>
            <person name="Churcher C.M."/>
            <person name="Collins M."/>
            <person name="Connor R."/>
            <person name="Cronin A."/>
            <person name="Davis P."/>
            <person name="Feltwell T."/>
            <person name="Fraser A."/>
            <person name="Gentles S."/>
            <person name="Goble A."/>
            <person name="Hamlin N."/>
            <person name="Harris D.E."/>
            <person name="Hidalgo J."/>
            <person name="Hodgson G."/>
            <person name="Holroyd S."/>
            <person name="Hornsby T."/>
            <person name="Howarth S."/>
            <person name="Huckle E.J."/>
            <person name="Hunt S."/>
            <person name="Jagels K."/>
            <person name="James K.D."/>
            <person name="Jones L."/>
            <person name="Jones M."/>
            <person name="Leather S."/>
            <person name="McDonald S."/>
            <person name="McLean J."/>
            <person name="Mooney P."/>
            <person name="Moule S."/>
            <person name="Mungall K.L."/>
            <person name="Murphy L.D."/>
            <person name="Niblett D."/>
            <person name="Odell C."/>
            <person name="Oliver K."/>
            <person name="O'Neil S."/>
            <person name="Pearson D."/>
            <person name="Quail M.A."/>
            <person name="Rabbinowitsch E."/>
            <person name="Rutherford K.M."/>
            <person name="Rutter S."/>
            <person name="Saunders D."/>
            <person name="Seeger K."/>
            <person name="Sharp S."/>
            <person name="Skelton J."/>
            <person name="Simmonds M.N."/>
            <person name="Squares R."/>
            <person name="Squares S."/>
            <person name="Stevens K."/>
            <person name="Taylor K."/>
            <person name="Taylor R.G."/>
            <person name="Tivey A."/>
            <person name="Walsh S.V."/>
            <person name="Warren T."/>
            <person name="Whitehead S."/>
            <person name="Woodward J.R."/>
            <person name="Volckaert G."/>
            <person name="Aert R."/>
            <person name="Robben J."/>
            <person name="Grymonprez B."/>
            <person name="Weltjens I."/>
            <person name="Vanstreels E."/>
            <person name="Rieger M."/>
            <person name="Schaefer M."/>
            <person name="Mueller-Auer S."/>
            <person name="Gabel C."/>
            <person name="Fuchs M."/>
            <person name="Duesterhoeft A."/>
            <person name="Fritzc C."/>
            <person name="Holzer E."/>
            <person name="Moestl D."/>
            <person name="Hilbert H."/>
            <person name="Borzym K."/>
            <person name="Langer I."/>
            <person name="Beck A."/>
            <person name="Lehrach H."/>
            <person name="Reinhardt R."/>
            <person name="Pohl T.M."/>
            <person name="Eger P."/>
            <person name="Zimmermann W."/>
            <person name="Wedler H."/>
            <person name="Wambutt R."/>
            <person name="Purnelle B."/>
            <person name="Goffeau A."/>
            <person name="Cadieu E."/>
            <person name="Dreano S."/>
            <person name="Gloux S."/>
            <person name="Lelaure V."/>
            <person name="Mottier S."/>
            <person name="Galibert F."/>
            <person name="Aves S.J."/>
            <person name="Xiang Z."/>
            <person name="Hunt C."/>
            <person name="Moore K."/>
            <person name="Hurst S.M."/>
            <person name="Lucas M."/>
            <person name="Rochet M."/>
            <person name="Gaillardin C."/>
            <person name="Tallada V.A."/>
            <person name="Garzon A."/>
            <person name="Thode G."/>
            <person name="Daga R.R."/>
            <person name="Cruzado L."/>
            <person name="Jimenez J."/>
            <person name="Sanchez M."/>
            <person name="del Rey F."/>
            <person name="Benito J."/>
            <person name="Dominguez A."/>
            <person name="Revuelta J.L."/>
            <person name="Moreno S."/>
            <person name="Armstrong J."/>
            <person name="Forsburg S.L."/>
            <person name="Cerutti L."/>
            <person name="Lowe T."/>
            <person name="McCombie W.R."/>
            <person name="Paulsen I."/>
            <person name="Potashkin J."/>
            <person name="Shpakovski G.V."/>
            <person name="Ussery D."/>
            <person name="Barrell B.G."/>
            <person name="Nurse P."/>
        </authorList>
    </citation>
    <scope>NUCLEOTIDE SEQUENCE [LARGE SCALE GENOMIC DNA]</scope>
    <source>
        <strain>972 / ATCC 24843</strain>
    </source>
</reference>
<gene>
    <name type="ORF">SPBC16A3.14</name>
</gene>
<protein>
    <recommendedName>
        <fullName evidence="3">Small ribosomal subunit protein mS43</fullName>
    </recommendedName>
    <alternativeName>
        <fullName>37S ribosomal protein S26A, mitochondrial</fullName>
    </alternativeName>
</protein>